<organism>
    <name type="scientific">Phenylobacterium zucineum (strain HLK1)</name>
    <dbReference type="NCBI Taxonomy" id="450851"/>
    <lineage>
        <taxon>Bacteria</taxon>
        <taxon>Pseudomonadati</taxon>
        <taxon>Pseudomonadota</taxon>
        <taxon>Alphaproteobacteria</taxon>
        <taxon>Caulobacterales</taxon>
        <taxon>Caulobacteraceae</taxon>
        <taxon>Phenylobacterium</taxon>
    </lineage>
</organism>
<feature type="chain" id="PRO_1000098593" description="Threonine--tRNA ligase">
    <location>
        <begin position="1"/>
        <end position="658"/>
    </location>
</feature>
<feature type="domain" description="TGS" evidence="2">
    <location>
        <begin position="1"/>
        <end position="61"/>
    </location>
</feature>
<feature type="region of interest" description="Catalytic" evidence="1">
    <location>
        <begin position="243"/>
        <end position="535"/>
    </location>
</feature>
<feature type="binding site" evidence="1">
    <location>
        <position position="335"/>
    </location>
    <ligand>
        <name>Zn(2+)</name>
        <dbReference type="ChEBI" id="CHEBI:29105"/>
    </ligand>
</feature>
<feature type="binding site" evidence="1">
    <location>
        <position position="386"/>
    </location>
    <ligand>
        <name>Zn(2+)</name>
        <dbReference type="ChEBI" id="CHEBI:29105"/>
    </ligand>
</feature>
<feature type="binding site" evidence="1">
    <location>
        <position position="512"/>
    </location>
    <ligand>
        <name>Zn(2+)</name>
        <dbReference type="ChEBI" id="CHEBI:29105"/>
    </ligand>
</feature>
<comment type="function">
    <text evidence="1">Catalyzes the attachment of threonine to tRNA(Thr) in a two-step reaction: L-threonine is first activated by ATP to form Thr-AMP and then transferred to the acceptor end of tRNA(Thr). Also edits incorrectly charged L-seryl-tRNA(Thr).</text>
</comment>
<comment type="catalytic activity">
    <reaction evidence="1">
        <text>tRNA(Thr) + L-threonine + ATP = L-threonyl-tRNA(Thr) + AMP + diphosphate + H(+)</text>
        <dbReference type="Rhea" id="RHEA:24624"/>
        <dbReference type="Rhea" id="RHEA-COMP:9670"/>
        <dbReference type="Rhea" id="RHEA-COMP:9704"/>
        <dbReference type="ChEBI" id="CHEBI:15378"/>
        <dbReference type="ChEBI" id="CHEBI:30616"/>
        <dbReference type="ChEBI" id="CHEBI:33019"/>
        <dbReference type="ChEBI" id="CHEBI:57926"/>
        <dbReference type="ChEBI" id="CHEBI:78442"/>
        <dbReference type="ChEBI" id="CHEBI:78534"/>
        <dbReference type="ChEBI" id="CHEBI:456215"/>
        <dbReference type="EC" id="6.1.1.3"/>
    </reaction>
</comment>
<comment type="cofactor">
    <cofactor evidence="1">
        <name>Zn(2+)</name>
        <dbReference type="ChEBI" id="CHEBI:29105"/>
    </cofactor>
    <text evidence="1">Binds 1 zinc ion per subunit.</text>
</comment>
<comment type="subunit">
    <text evidence="1">Homodimer.</text>
</comment>
<comment type="subcellular location">
    <subcellularLocation>
        <location evidence="1">Cytoplasm</location>
    </subcellularLocation>
</comment>
<comment type="similarity">
    <text evidence="1">Belongs to the class-II aminoacyl-tRNA synthetase family.</text>
</comment>
<gene>
    <name evidence="1" type="primary">thrS</name>
    <name type="ordered locus">PHZ_c0423</name>
</gene>
<evidence type="ECO:0000255" key="1">
    <source>
        <dbReference type="HAMAP-Rule" id="MF_00184"/>
    </source>
</evidence>
<evidence type="ECO:0000255" key="2">
    <source>
        <dbReference type="PROSITE-ProRule" id="PRU01228"/>
    </source>
</evidence>
<proteinExistence type="inferred from homology"/>
<sequence>MIELVFPDGSKREFPDGVTGREIAAGISKSLEKKAILVEVDGELLDLERPLEKGGAFKILTREAPEALETIRHDVSHILAEAVQELFPGTQVTIGPAIEDGFYYDFAREEPFSLDDLAKIEQRMKEIVDRDEPIRREEWDRDEAIRHFREIGEEYKAQIIEAIPAGEKITVYRQGQWKDLCRGPHLPSTRHAGKAFKLTKLAGAYWRGDHRNAQLQRIYGTAWASEADLEAYIQRLEEAEKRDHRKLGRQMDLFHMQEEGKGMVFWHEKGLTLWRTVESYVRRRLDEAGYQEVRTPQVLDRVFWEKSGHWDKYRPNMFVCETEEGEELSLKPMNCPGHVQIFKFGQKSYRDLPLRMAEFGACHRYEPSGALHGLMRVRAFTQDDAHIFCREDQIEEETARFIELANSIHADFGLERDHIALATRPEVRAGSDEFWDKAEAQMLAAARKAGVEPVIAEGDGAFYAPKLDWVLKDSIGRTWTCGTIQLDYVLPERLGAEYVAEDGSKQRPVMLHRAICGSLERFIGVLIENYAGAFPLWLAPVQVVVATITSDADDYARAAAAELKAKGLRVELDLRNEKINYKVREHSLAKVPVIAVVGRREAEEGKVALRRLGSDGQQILALGEAAEALAMEALPPDLARKRQDGGVQAGLGGEREAG</sequence>
<reference key="1">
    <citation type="journal article" date="2008" name="BMC Genomics">
        <title>Complete genome of Phenylobacterium zucineum - a novel facultative intracellular bacterium isolated from human erythroleukemia cell line K562.</title>
        <authorList>
            <person name="Luo Y."/>
            <person name="Xu X."/>
            <person name="Ding Z."/>
            <person name="Liu Z."/>
            <person name="Zhang B."/>
            <person name="Yan Z."/>
            <person name="Sun J."/>
            <person name="Hu S."/>
            <person name="Hu X."/>
        </authorList>
    </citation>
    <scope>NUCLEOTIDE SEQUENCE [LARGE SCALE GENOMIC DNA]</scope>
    <source>
        <strain>HLK1</strain>
    </source>
</reference>
<dbReference type="EC" id="6.1.1.3" evidence="1"/>
<dbReference type="EMBL" id="CP000747">
    <property type="protein sequence ID" value="ACG76837.1"/>
    <property type="molecule type" value="Genomic_DNA"/>
</dbReference>
<dbReference type="RefSeq" id="WP_012520985.1">
    <property type="nucleotide sequence ID" value="NC_011144.1"/>
</dbReference>
<dbReference type="SMR" id="B4RE95"/>
<dbReference type="STRING" id="450851.PHZ_c0423"/>
<dbReference type="KEGG" id="pzu:PHZ_c0423"/>
<dbReference type="eggNOG" id="COG0441">
    <property type="taxonomic scope" value="Bacteria"/>
</dbReference>
<dbReference type="HOGENOM" id="CLU_008554_0_1_5"/>
<dbReference type="OrthoDB" id="9802304at2"/>
<dbReference type="Proteomes" id="UP000001868">
    <property type="component" value="Chromosome"/>
</dbReference>
<dbReference type="GO" id="GO:0005829">
    <property type="term" value="C:cytosol"/>
    <property type="evidence" value="ECO:0007669"/>
    <property type="project" value="TreeGrafter"/>
</dbReference>
<dbReference type="GO" id="GO:0005524">
    <property type="term" value="F:ATP binding"/>
    <property type="evidence" value="ECO:0007669"/>
    <property type="project" value="UniProtKB-UniRule"/>
</dbReference>
<dbReference type="GO" id="GO:0046872">
    <property type="term" value="F:metal ion binding"/>
    <property type="evidence" value="ECO:0007669"/>
    <property type="project" value="UniProtKB-KW"/>
</dbReference>
<dbReference type="GO" id="GO:0004829">
    <property type="term" value="F:threonine-tRNA ligase activity"/>
    <property type="evidence" value="ECO:0007669"/>
    <property type="project" value="UniProtKB-UniRule"/>
</dbReference>
<dbReference type="GO" id="GO:0000049">
    <property type="term" value="F:tRNA binding"/>
    <property type="evidence" value="ECO:0007669"/>
    <property type="project" value="UniProtKB-KW"/>
</dbReference>
<dbReference type="GO" id="GO:0006435">
    <property type="term" value="P:threonyl-tRNA aminoacylation"/>
    <property type="evidence" value="ECO:0007669"/>
    <property type="project" value="UniProtKB-UniRule"/>
</dbReference>
<dbReference type="CDD" id="cd01667">
    <property type="entry name" value="TGS_ThrRS"/>
    <property type="match status" value="1"/>
</dbReference>
<dbReference type="CDD" id="cd00860">
    <property type="entry name" value="ThrRS_anticodon"/>
    <property type="match status" value="1"/>
</dbReference>
<dbReference type="CDD" id="cd00771">
    <property type="entry name" value="ThrRS_core"/>
    <property type="match status" value="1"/>
</dbReference>
<dbReference type="FunFam" id="3.30.54.20:FF:000002">
    <property type="entry name" value="Threonine--tRNA ligase"/>
    <property type="match status" value="1"/>
</dbReference>
<dbReference type="FunFam" id="3.30.930.10:FF:000002">
    <property type="entry name" value="Threonine--tRNA ligase"/>
    <property type="match status" value="1"/>
</dbReference>
<dbReference type="FunFam" id="3.40.50.800:FF:000001">
    <property type="entry name" value="Threonine--tRNA ligase"/>
    <property type="match status" value="1"/>
</dbReference>
<dbReference type="FunFam" id="3.30.980.10:FF:000005">
    <property type="entry name" value="Threonyl-tRNA synthetase, mitochondrial"/>
    <property type="match status" value="1"/>
</dbReference>
<dbReference type="Gene3D" id="3.10.20.30">
    <property type="match status" value="1"/>
</dbReference>
<dbReference type="Gene3D" id="3.30.54.20">
    <property type="match status" value="1"/>
</dbReference>
<dbReference type="Gene3D" id="3.40.50.800">
    <property type="entry name" value="Anticodon-binding domain"/>
    <property type="match status" value="1"/>
</dbReference>
<dbReference type="Gene3D" id="3.30.930.10">
    <property type="entry name" value="Bira Bifunctional Protein, Domain 2"/>
    <property type="match status" value="1"/>
</dbReference>
<dbReference type="Gene3D" id="3.30.980.10">
    <property type="entry name" value="Threonyl-trna Synthetase, Chain A, domain 2"/>
    <property type="match status" value="1"/>
</dbReference>
<dbReference type="HAMAP" id="MF_00184">
    <property type="entry name" value="Thr_tRNA_synth"/>
    <property type="match status" value="1"/>
</dbReference>
<dbReference type="InterPro" id="IPR002314">
    <property type="entry name" value="aa-tRNA-synt_IIb"/>
</dbReference>
<dbReference type="InterPro" id="IPR006195">
    <property type="entry name" value="aa-tRNA-synth_II"/>
</dbReference>
<dbReference type="InterPro" id="IPR045864">
    <property type="entry name" value="aa-tRNA-synth_II/BPL/LPL"/>
</dbReference>
<dbReference type="InterPro" id="IPR004154">
    <property type="entry name" value="Anticodon-bd"/>
</dbReference>
<dbReference type="InterPro" id="IPR036621">
    <property type="entry name" value="Anticodon-bd_dom_sf"/>
</dbReference>
<dbReference type="InterPro" id="IPR012675">
    <property type="entry name" value="Beta-grasp_dom_sf"/>
</dbReference>
<dbReference type="InterPro" id="IPR004095">
    <property type="entry name" value="TGS"/>
</dbReference>
<dbReference type="InterPro" id="IPR012676">
    <property type="entry name" value="TGS-like"/>
</dbReference>
<dbReference type="InterPro" id="IPR002320">
    <property type="entry name" value="Thr-tRNA-ligase_IIa"/>
</dbReference>
<dbReference type="InterPro" id="IPR018163">
    <property type="entry name" value="Thr/Ala-tRNA-synth_IIc_edit"/>
</dbReference>
<dbReference type="InterPro" id="IPR047246">
    <property type="entry name" value="ThrRS_anticodon"/>
</dbReference>
<dbReference type="InterPro" id="IPR033728">
    <property type="entry name" value="ThrRS_core"/>
</dbReference>
<dbReference type="InterPro" id="IPR012947">
    <property type="entry name" value="tRNA_SAD"/>
</dbReference>
<dbReference type="NCBIfam" id="TIGR00418">
    <property type="entry name" value="thrS"/>
    <property type="match status" value="1"/>
</dbReference>
<dbReference type="PANTHER" id="PTHR11451:SF44">
    <property type="entry name" value="THREONINE--TRNA LIGASE, CHLOROPLASTIC_MITOCHONDRIAL 2"/>
    <property type="match status" value="1"/>
</dbReference>
<dbReference type="PANTHER" id="PTHR11451">
    <property type="entry name" value="THREONINE-TRNA LIGASE"/>
    <property type="match status" value="1"/>
</dbReference>
<dbReference type="Pfam" id="PF03129">
    <property type="entry name" value="HGTP_anticodon"/>
    <property type="match status" value="1"/>
</dbReference>
<dbReference type="Pfam" id="PF02824">
    <property type="entry name" value="TGS"/>
    <property type="match status" value="1"/>
</dbReference>
<dbReference type="Pfam" id="PF00587">
    <property type="entry name" value="tRNA-synt_2b"/>
    <property type="match status" value="1"/>
</dbReference>
<dbReference type="Pfam" id="PF07973">
    <property type="entry name" value="tRNA_SAD"/>
    <property type="match status" value="1"/>
</dbReference>
<dbReference type="PRINTS" id="PR01047">
    <property type="entry name" value="TRNASYNTHTHR"/>
</dbReference>
<dbReference type="SMART" id="SM00863">
    <property type="entry name" value="tRNA_SAD"/>
    <property type="match status" value="1"/>
</dbReference>
<dbReference type="SUPFAM" id="SSF52954">
    <property type="entry name" value="Class II aaRS ABD-related"/>
    <property type="match status" value="1"/>
</dbReference>
<dbReference type="SUPFAM" id="SSF55681">
    <property type="entry name" value="Class II aaRS and biotin synthetases"/>
    <property type="match status" value="1"/>
</dbReference>
<dbReference type="SUPFAM" id="SSF81271">
    <property type="entry name" value="TGS-like"/>
    <property type="match status" value="1"/>
</dbReference>
<dbReference type="SUPFAM" id="SSF55186">
    <property type="entry name" value="ThrRS/AlaRS common domain"/>
    <property type="match status" value="1"/>
</dbReference>
<dbReference type="PROSITE" id="PS50862">
    <property type="entry name" value="AA_TRNA_LIGASE_II"/>
    <property type="match status" value="1"/>
</dbReference>
<dbReference type="PROSITE" id="PS51880">
    <property type="entry name" value="TGS"/>
    <property type="match status" value="1"/>
</dbReference>
<accession>B4RE95</accession>
<protein>
    <recommendedName>
        <fullName evidence="1">Threonine--tRNA ligase</fullName>
        <ecNumber evidence="1">6.1.1.3</ecNumber>
    </recommendedName>
    <alternativeName>
        <fullName evidence="1">Threonyl-tRNA synthetase</fullName>
        <shortName evidence="1">ThrRS</shortName>
    </alternativeName>
</protein>
<keyword id="KW-0030">Aminoacyl-tRNA synthetase</keyword>
<keyword id="KW-0067">ATP-binding</keyword>
<keyword id="KW-0963">Cytoplasm</keyword>
<keyword id="KW-0436">Ligase</keyword>
<keyword id="KW-0479">Metal-binding</keyword>
<keyword id="KW-0547">Nucleotide-binding</keyword>
<keyword id="KW-0648">Protein biosynthesis</keyword>
<keyword id="KW-1185">Reference proteome</keyword>
<keyword id="KW-0694">RNA-binding</keyword>
<keyword id="KW-0820">tRNA-binding</keyword>
<keyword id="KW-0862">Zinc</keyword>
<name>SYT_PHEZH</name>